<dbReference type="PIR" id="S77984">
    <property type="entry name" value="S77984"/>
</dbReference>
<dbReference type="UniPathway" id="UPA00705"/>
<dbReference type="GO" id="GO:0005743">
    <property type="term" value="C:mitochondrial inner membrane"/>
    <property type="evidence" value="ECO:0007669"/>
    <property type="project" value="UniProtKB-SubCell"/>
</dbReference>
<dbReference type="GO" id="GO:0016491">
    <property type="term" value="F:oxidoreductase activity"/>
    <property type="evidence" value="ECO:0007669"/>
    <property type="project" value="UniProtKB-KW"/>
</dbReference>
<dbReference type="GO" id="GO:0006119">
    <property type="term" value="P:oxidative phosphorylation"/>
    <property type="evidence" value="ECO:0007669"/>
    <property type="project" value="UniProtKB-UniPathway"/>
</dbReference>
<reference key="1">
    <citation type="journal article" date="1997" name="Eur. J. Biochem.">
        <title>The subunit structure of cytochrome-c oxidase from tuna heart and liver.</title>
        <authorList>
            <person name="Arnold S."/>
            <person name="Lee I."/>
            <person name="Kim M."/>
            <person name="Song E."/>
            <person name="Linder D."/>
            <person name="Lottspeich F."/>
            <person name="Kadenbach B."/>
        </authorList>
    </citation>
    <scope>PROTEIN SEQUENCE</scope>
    <source>
        <tissue>Heart</tissue>
    </source>
</reference>
<name>COX6A_THUOB</name>
<evidence type="ECO:0000250" key="1">
    <source>
        <dbReference type="UniProtKB" id="P12074"/>
    </source>
</evidence>
<evidence type="ECO:0000250" key="2">
    <source>
        <dbReference type="UniProtKB" id="P32799"/>
    </source>
</evidence>
<evidence type="ECO:0000305" key="3"/>
<protein>
    <recommendedName>
        <fullName>Cytochrome c oxidase subunit 6A, mitochondrial</fullName>
    </recommendedName>
    <alternativeName>
        <fullName>Cytochrome c oxidase polypeptide VIa</fullName>
    </alternativeName>
</protein>
<comment type="function">
    <text evidence="2">Component of the cytochrome c oxidase, the last enzyme in the mitochondrial electron transport chain which drives oxidative phosphorylation. The respiratory chain contains 3 multisubunit complexes succinate dehydrogenase (complex II, CII), ubiquinol-cytochrome c oxidoreductase (cytochrome b-c1 complex, complex III, CIII) and cytochrome c oxidase (complex IV, CIV), that cooperate to transfer electrons derived from NADH and succinate to molecular oxygen, creating an electrochemical gradient over the inner membrane that drives transmembrane transport and the ATP synthase. Cytochrome c oxidase is the component of the respiratory chain that catalyzes the reduction of oxygen to water. Electrons originating from reduced cytochrome c in the intermembrane space (IMS) are transferred via the dinuclear copper A center (CU(A)) of subunit 2 and heme A of subunit 1 to the active site in subunit 1, a binuclear center (BNC) formed by heme A3 and copper B (CU(B)). The BNC reduces molecular oxygen to 2 water molecules unsing 4 electrons from cytochrome c in the IMS and 4 protons from the mitochondrial matrix.</text>
</comment>
<comment type="pathway">
    <text evidence="2">Energy metabolism; oxidative phosphorylation.</text>
</comment>
<comment type="subunit">
    <text evidence="1">Component of the cytochrome c oxidase (complex IV, CIV), a multisubunit enzyme composed of 14 subunits. The complex is composed of a catalytic core of 3 subunits MT-CO1, MT-CO2 and MT-CO3, encoded in the mitochondrial DNA, and 11 supernumerary subunits COX4I, COX5A, COX5B, COX6A, COX6B, COX6C, COX7A, COX7B, COX7C, COX8 and NDUFA4, which are encoded in the nuclear genome. The complex exists as a monomer or a dimer and forms supercomplexes (SCs) in the inner mitochondrial membrane with NADH-ubiquinone oxidoreductase (complex I, CI) and ubiquinol-cytochrome c oxidoreductase (cytochrome b-c1 complex, complex III, CIII), resulting in different assemblies (supercomplex SCI(1)III(2)IV(1) and megacomplex MCI(2)III(2)IV(2)).</text>
</comment>
<comment type="subcellular location">
    <subcellularLocation>
        <location evidence="1">Mitochondrion inner membrane</location>
        <topology evidence="1">Single-pass membrane protein</topology>
    </subcellularLocation>
</comment>
<comment type="similarity">
    <text evidence="3">Belongs to the cytochrome c oxidase subunit 6A family.</text>
</comment>
<organism>
    <name type="scientific">Thunnus obesus</name>
    <name type="common">Bigeye tuna</name>
    <dbReference type="NCBI Taxonomy" id="8241"/>
    <lineage>
        <taxon>Eukaryota</taxon>
        <taxon>Metazoa</taxon>
        <taxon>Chordata</taxon>
        <taxon>Craniata</taxon>
        <taxon>Vertebrata</taxon>
        <taxon>Euteleostomi</taxon>
        <taxon>Actinopterygii</taxon>
        <taxon>Neopterygii</taxon>
        <taxon>Teleostei</taxon>
        <taxon>Neoteleostei</taxon>
        <taxon>Acanthomorphata</taxon>
        <taxon>Pelagiaria</taxon>
        <taxon>Scombriformes</taxon>
        <taxon>Scombridae</taxon>
        <taxon>Thunnus</taxon>
    </lineage>
</organism>
<feature type="chain" id="PRO_0000193450" description="Cytochrome c oxidase subunit 6A, mitochondrial">
    <location>
        <begin position="1" status="less than"/>
        <end position="9" status="greater than"/>
    </location>
</feature>
<feature type="non-terminal residue">
    <location>
        <position position="1"/>
    </location>
</feature>
<feature type="non-terminal residue">
    <location>
        <position position="9"/>
    </location>
</feature>
<proteinExistence type="evidence at protein level"/>
<accession>P80975</accession>
<sequence>KEQPEFVPY</sequence>
<keyword id="KW-0903">Direct protein sequencing</keyword>
<keyword id="KW-0472">Membrane</keyword>
<keyword id="KW-0496">Mitochondrion</keyword>
<keyword id="KW-0999">Mitochondrion inner membrane</keyword>
<keyword id="KW-0560">Oxidoreductase</keyword>
<keyword id="KW-0812">Transmembrane</keyword>
<keyword id="KW-1133">Transmembrane helix</keyword>